<proteinExistence type="inferred from homology"/>
<gene>
    <name evidence="1" type="primary">minE</name>
    <name type="ordered locus">lpp1690</name>
</gene>
<evidence type="ECO:0000255" key="1">
    <source>
        <dbReference type="HAMAP-Rule" id="MF_00262"/>
    </source>
</evidence>
<feature type="chain" id="PRO_0000298131" description="Cell division topological specificity factor">
    <location>
        <begin position="1"/>
        <end position="89"/>
    </location>
</feature>
<organism>
    <name type="scientific">Legionella pneumophila (strain Paris)</name>
    <dbReference type="NCBI Taxonomy" id="297246"/>
    <lineage>
        <taxon>Bacteria</taxon>
        <taxon>Pseudomonadati</taxon>
        <taxon>Pseudomonadota</taxon>
        <taxon>Gammaproteobacteria</taxon>
        <taxon>Legionellales</taxon>
        <taxon>Legionellaceae</taxon>
        <taxon>Legionella</taxon>
    </lineage>
</organism>
<sequence>MSIFNYLRRRASTASVAKERLQIIISHERSQRNTPDYLPKLQEEILAVIAKYVNISRDQVSVNLERMEDSAVLELNITMPDKALEDSNS</sequence>
<reference key="1">
    <citation type="journal article" date="2004" name="Nat. Genet.">
        <title>Evidence in the Legionella pneumophila genome for exploitation of host cell functions and high genome plasticity.</title>
        <authorList>
            <person name="Cazalet C."/>
            <person name="Rusniok C."/>
            <person name="Brueggemann H."/>
            <person name="Zidane N."/>
            <person name="Magnier A."/>
            <person name="Ma L."/>
            <person name="Tichit M."/>
            <person name="Jarraud S."/>
            <person name="Bouchier C."/>
            <person name="Vandenesch F."/>
            <person name="Kunst F."/>
            <person name="Etienne J."/>
            <person name="Glaser P."/>
            <person name="Buchrieser C."/>
        </authorList>
    </citation>
    <scope>NUCLEOTIDE SEQUENCE [LARGE SCALE GENOMIC DNA]</scope>
    <source>
        <strain>Paris</strain>
    </source>
</reference>
<comment type="function">
    <text evidence="1">Prevents the cell division inhibition by proteins MinC and MinD at internal division sites while permitting inhibition at polar sites. This ensures cell division at the proper site by restricting the formation of a division septum at the midpoint of the long axis of the cell.</text>
</comment>
<comment type="similarity">
    <text evidence="1">Belongs to the MinE family.</text>
</comment>
<dbReference type="EMBL" id="CR628336">
    <property type="protein sequence ID" value="CAH12842.1"/>
    <property type="molecule type" value="Genomic_DNA"/>
</dbReference>
<dbReference type="RefSeq" id="WP_011213993.1">
    <property type="nucleotide sequence ID" value="NC_006368.1"/>
</dbReference>
<dbReference type="SMR" id="Q5X4I6"/>
<dbReference type="GeneID" id="57035714"/>
<dbReference type="KEGG" id="lpp:lpp1690"/>
<dbReference type="LegioList" id="lpp1690"/>
<dbReference type="HOGENOM" id="CLU_137929_2_1_6"/>
<dbReference type="GO" id="GO:0051301">
    <property type="term" value="P:cell division"/>
    <property type="evidence" value="ECO:0007669"/>
    <property type="project" value="UniProtKB-KW"/>
</dbReference>
<dbReference type="GO" id="GO:0032955">
    <property type="term" value="P:regulation of division septum assembly"/>
    <property type="evidence" value="ECO:0007669"/>
    <property type="project" value="InterPro"/>
</dbReference>
<dbReference type="FunFam" id="3.30.1070.10:FF:000001">
    <property type="entry name" value="Cell division topological specificity factor"/>
    <property type="match status" value="1"/>
</dbReference>
<dbReference type="Gene3D" id="3.30.1070.10">
    <property type="entry name" value="Cell division topological specificity factor MinE"/>
    <property type="match status" value="1"/>
</dbReference>
<dbReference type="HAMAP" id="MF_00262">
    <property type="entry name" value="MinE"/>
    <property type="match status" value="1"/>
</dbReference>
<dbReference type="InterPro" id="IPR005527">
    <property type="entry name" value="MinE"/>
</dbReference>
<dbReference type="InterPro" id="IPR036707">
    <property type="entry name" value="MinE_sf"/>
</dbReference>
<dbReference type="NCBIfam" id="TIGR01215">
    <property type="entry name" value="minE"/>
    <property type="match status" value="1"/>
</dbReference>
<dbReference type="NCBIfam" id="NF001422">
    <property type="entry name" value="PRK00296.1"/>
    <property type="match status" value="1"/>
</dbReference>
<dbReference type="Pfam" id="PF03776">
    <property type="entry name" value="MinE"/>
    <property type="match status" value="1"/>
</dbReference>
<dbReference type="SUPFAM" id="SSF55229">
    <property type="entry name" value="Cell division protein MinE topological specificity domain"/>
    <property type="match status" value="1"/>
</dbReference>
<protein>
    <recommendedName>
        <fullName evidence="1">Cell division topological specificity factor</fullName>
    </recommendedName>
</protein>
<keyword id="KW-0131">Cell cycle</keyword>
<keyword id="KW-0132">Cell division</keyword>
<name>MINE_LEGPA</name>
<accession>Q5X4I6</accession>